<reference key="1">
    <citation type="submission" date="2007-05" db="EMBL/GenBank/DDBJ databases">
        <title>Complete sequence of Geobacter uraniireducens Rf4.</title>
        <authorList>
            <consortium name="US DOE Joint Genome Institute"/>
            <person name="Copeland A."/>
            <person name="Lucas S."/>
            <person name="Lapidus A."/>
            <person name="Barry K."/>
            <person name="Detter J.C."/>
            <person name="Glavina del Rio T."/>
            <person name="Hammon N."/>
            <person name="Israni S."/>
            <person name="Dalin E."/>
            <person name="Tice H."/>
            <person name="Pitluck S."/>
            <person name="Chertkov O."/>
            <person name="Brettin T."/>
            <person name="Bruce D."/>
            <person name="Han C."/>
            <person name="Schmutz J."/>
            <person name="Larimer F."/>
            <person name="Land M."/>
            <person name="Hauser L."/>
            <person name="Kyrpides N."/>
            <person name="Mikhailova N."/>
            <person name="Shelobolina E."/>
            <person name="Aklujkar M."/>
            <person name="Lovley D."/>
            <person name="Richardson P."/>
        </authorList>
    </citation>
    <scope>NUCLEOTIDE SEQUENCE [LARGE SCALE GENOMIC DNA]</scope>
    <source>
        <strain>ATCC BAA-1134 / JCM 13001 / Rf4</strain>
    </source>
</reference>
<proteinExistence type="inferred from homology"/>
<organism>
    <name type="scientific">Geotalea uraniireducens (strain Rf4)</name>
    <name type="common">Geobacter uraniireducens</name>
    <dbReference type="NCBI Taxonomy" id="351605"/>
    <lineage>
        <taxon>Bacteria</taxon>
        <taxon>Pseudomonadati</taxon>
        <taxon>Thermodesulfobacteriota</taxon>
        <taxon>Desulfuromonadia</taxon>
        <taxon>Geobacterales</taxon>
        <taxon>Geobacteraceae</taxon>
        <taxon>Geotalea</taxon>
    </lineage>
</organism>
<keyword id="KW-1185">Reference proteome</keyword>
<keyword id="KW-0687">Ribonucleoprotein</keyword>
<keyword id="KW-0689">Ribosomal protein</keyword>
<gene>
    <name evidence="1" type="primary">rpsU</name>
    <name type="ordered locus">Gura_4051</name>
</gene>
<evidence type="ECO:0000255" key="1">
    <source>
        <dbReference type="HAMAP-Rule" id="MF_00358"/>
    </source>
</evidence>
<evidence type="ECO:0000305" key="2"/>
<name>RS21_GEOUR</name>
<accession>A5G8S7</accession>
<dbReference type="EMBL" id="CP000698">
    <property type="protein sequence ID" value="ABQ28195.1"/>
    <property type="molecule type" value="Genomic_DNA"/>
</dbReference>
<dbReference type="RefSeq" id="WP_011940832.1">
    <property type="nucleotide sequence ID" value="NC_009483.1"/>
</dbReference>
<dbReference type="SMR" id="A5G8S7"/>
<dbReference type="STRING" id="351605.Gura_4051"/>
<dbReference type="KEGG" id="gur:Gura_4051"/>
<dbReference type="HOGENOM" id="CLU_159258_1_2_7"/>
<dbReference type="OrthoDB" id="9799244at2"/>
<dbReference type="Proteomes" id="UP000006695">
    <property type="component" value="Chromosome"/>
</dbReference>
<dbReference type="GO" id="GO:1990904">
    <property type="term" value="C:ribonucleoprotein complex"/>
    <property type="evidence" value="ECO:0007669"/>
    <property type="project" value="UniProtKB-KW"/>
</dbReference>
<dbReference type="GO" id="GO:0005840">
    <property type="term" value="C:ribosome"/>
    <property type="evidence" value="ECO:0007669"/>
    <property type="project" value="UniProtKB-KW"/>
</dbReference>
<dbReference type="GO" id="GO:0003735">
    <property type="term" value="F:structural constituent of ribosome"/>
    <property type="evidence" value="ECO:0007669"/>
    <property type="project" value="InterPro"/>
</dbReference>
<dbReference type="GO" id="GO:0006412">
    <property type="term" value="P:translation"/>
    <property type="evidence" value="ECO:0007669"/>
    <property type="project" value="UniProtKB-UniRule"/>
</dbReference>
<dbReference type="Gene3D" id="1.20.5.1150">
    <property type="entry name" value="Ribosomal protein S8"/>
    <property type="match status" value="1"/>
</dbReference>
<dbReference type="HAMAP" id="MF_00358">
    <property type="entry name" value="Ribosomal_bS21"/>
    <property type="match status" value="1"/>
</dbReference>
<dbReference type="InterPro" id="IPR001911">
    <property type="entry name" value="Ribosomal_bS21"/>
</dbReference>
<dbReference type="InterPro" id="IPR038380">
    <property type="entry name" value="Ribosomal_bS21_sf"/>
</dbReference>
<dbReference type="NCBIfam" id="TIGR00030">
    <property type="entry name" value="S21p"/>
    <property type="match status" value="1"/>
</dbReference>
<dbReference type="PANTHER" id="PTHR21109">
    <property type="entry name" value="MITOCHONDRIAL 28S RIBOSOMAL PROTEIN S21"/>
    <property type="match status" value="1"/>
</dbReference>
<dbReference type="PANTHER" id="PTHR21109:SF22">
    <property type="entry name" value="SMALL RIBOSOMAL SUBUNIT PROTEIN BS21"/>
    <property type="match status" value="1"/>
</dbReference>
<dbReference type="Pfam" id="PF01165">
    <property type="entry name" value="Ribosomal_S21"/>
    <property type="match status" value="1"/>
</dbReference>
<dbReference type="PRINTS" id="PR00976">
    <property type="entry name" value="RIBOSOMALS21"/>
</dbReference>
<comment type="similarity">
    <text evidence="1">Belongs to the bacterial ribosomal protein bS21 family.</text>
</comment>
<sequence>MPGVKVKEAEPFELALKKFKKQCEKAGILSEVRKREHYEKPSIKKKKKAIAARKRALKKQRKMVD</sequence>
<protein>
    <recommendedName>
        <fullName evidence="1">Small ribosomal subunit protein bS21</fullName>
    </recommendedName>
    <alternativeName>
        <fullName evidence="2">30S ribosomal protein S21</fullName>
    </alternativeName>
</protein>
<feature type="chain" id="PRO_1000079408" description="Small ribosomal subunit protein bS21">
    <location>
        <begin position="1"/>
        <end position="65"/>
    </location>
</feature>